<sequence>MFNNSSKILFITIMIIGTLITVTSNSWLGAWMGLEINLLSFIPLLSDNNNLMSTEASLKYFLTQVLASTVLLFSSILLMLKNNMNNEINESFTSMIIMSALLLKSGAAPFHFWFPNMMEGLTWMNALMLMTWQKIAPLMLISYLNIKYLLLISVILSVIIGAIGGLNQTSLRKLMAFSSINHLGWMLSSLMISESIWLIYFFFYSFLSFVLTFMFNIFKLFHLNQLFSWFVNSKILKFTLFMNFLSLGGLPPFLGFLPKWLVIQQLTLCNQYFMLTLMMMSTLITLFFYLRICYSAFMMNYFENNWIMKMNMNSINYNMYMIMTFFSIFGLFLISLFYFMF</sequence>
<keyword id="KW-0002">3D-structure</keyword>
<keyword id="KW-0249">Electron transport</keyword>
<keyword id="KW-0472">Membrane</keyword>
<keyword id="KW-0496">Mitochondrion</keyword>
<keyword id="KW-0999">Mitochondrion inner membrane</keyword>
<keyword id="KW-0520">NAD</keyword>
<keyword id="KW-1185">Reference proteome</keyword>
<keyword id="KW-0679">Respiratory chain</keyword>
<keyword id="KW-1278">Translocase</keyword>
<keyword id="KW-0812">Transmembrane</keyword>
<keyword id="KW-1133">Transmembrane helix</keyword>
<keyword id="KW-0813">Transport</keyword>
<keyword id="KW-0830">Ubiquinone</keyword>
<protein>
    <recommendedName>
        <fullName>NADH-ubiquinone oxidoreductase chain 2</fullName>
        <ecNumber>7.1.1.2</ecNumber>
    </recommendedName>
    <alternativeName>
        <fullName>NADH dehydrogenase subunit 2</fullName>
    </alternativeName>
</protein>
<geneLocation type="mitochondrion"/>
<dbReference type="EC" id="7.1.1.2"/>
<dbReference type="EMBL" id="AF200828">
    <property type="protein sequence ID" value="AAF77226.1"/>
    <property type="molecule type" value="Genomic_DNA"/>
</dbReference>
<dbReference type="EMBL" id="AF200829">
    <property type="protein sequence ID" value="AAF77239.1"/>
    <property type="molecule type" value="Genomic_DNA"/>
</dbReference>
<dbReference type="EMBL" id="AJ400907">
    <property type="protein sequence ID" value="CAB91051.1"/>
    <property type="molecule type" value="Genomic_DNA"/>
</dbReference>
<dbReference type="EMBL" id="FJ190105">
    <property type="protein sequence ID" value="ACI28542.1"/>
    <property type="molecule type" value="Genomic_DNA"/>
</dbReference>
<dbReference type="EMBL" id="FJ190106">
    <property type="protein sequence ID" value="ACI28555.1"/>
    <property type="molecule type" value="Genomic_DNA"/>
</dbReference>
<dbReference type="EMBL" id="FJ190107">
    <property type="protein sequence ID" value="ACI28568.1"/>
    <property type="molecule type" value="Genomic_DNA"/>
</dbReference>
<dbReference type="EMBL" id="FJ190108">
    <property type="protein sequence ID" value="ACI28581.1"/>
    <property type="molecule type" value="Genomic_DNA"/>
</dbReference>
<dbReference type="EMBL" id="FJ190109">
    <property type="protein sequence ID" value="ACI28594.1"/>
    <property type="molecule type" value="Genomic_DNA"/>
</dbReference>
<dbReference type="EMBL" id="FJ190110">
    <property type="protein sequence ID" value="ACI28607.1"/>
    <property type="molecule type" value="Genomic_DNA"/>
</dbReference>
<dbReference type="EMBL" id="GQ229518">
    <property type="protein sequence ID" value="ACT21543.1"/>
    <property type="molecule type" value="mRNA"/>
</dbReference>
<dbReference type="EMBL" id="U37541">
    <property type="protein sequence ID" value="AAC47811.1"/>
    <property type="molecule type" value="Genomic_DNA"/>
</dbReference>
<dbReference type="EMBL" id="KJ947872">
    <property type="protein sequence ID" value="AIC64004.1"/>
    <property type="molecule type" value="Genomic_DNA"/>
</dbReference>
<dbReference type="EMBL" id="J01404">
    <property type="protein sequence ID" value="AAB59238.1"/>
    <property type="molecule type" value="Genomic_DNA"/>
</dbReference>
<dbReference type="EMBL" id="M57910">
    <property type="protein sequence ID" value="AAB02281.1"/>
    <property type="molecule type" value="Genomic_DNA"/>
</dbReference>
<dbReference type="PIR" id="A00419">
    <property type="entry name" value="QXFF2M"/>
</dbReference>
<dbReference type="RefSeq" id="YP_009047266.1">
    <property type="nucleotide sequence ID" value="NC_024511.2"/>
</dbReference>
<dbReference type="PDB" id="8B9Z">
    <property type="method" value="EM"/>
    <property type="resolution" value="3.28 A"/>
    <property type="chains" value="N=1-341"/>
</dbReference>
<dbReference type="PDB" id="8BA0">
    <property type="method" value="EM"/>
    <property type="resolution" value="3.68 A"/>
    <property type="chains" value="N=1-341"/>
</dbReference>
<dbReference type="PDB" id="8ESW">
    <property type="method" value="EM"/>
    <property type="resolution" value="3.30 A"/>
    <property type="chains" value="2=1-341"/>
</dbReference>
<dbReference type="PDB" id="8ESZ">
    <property type="method" value="EM"/>
    <property type="resolution" value="3.40 A"/>
    <property type="chains" value="2=1-341"/>
</dbReference>
<dbReference type="PDBsum" id="8B9Z"/>
<dbReference type="PDBsum" id="8BA0"/>
<dbReference type="PDBsum" id="8ESW"/>
<dbReference type="PDBsum" id="8ESZ"/>
<dbReference type="EMDB" id="EMD-15936"/>
<dbReference type="EMDB" id="EMD-15937"/>
<dbReference type="EMDB" id="EMD-28581"/>
<dbReference type="EMDB" id="EMD-28582"/>
<dbReference type="SMR" id="P03896"/>
<dbReference type="ComplexPortal" id="CPX-8628">
    <property type="entry name" value="Mitochondrial respiratory chain complex I"/>
</dbReference>
<dbReference type="ComplexPortal" id="CPX-8638">
    <property type="entry name" value="Mitochondrial respiratory chain complex I, testis-specific variant"/>
</dbReference>
<dbReference type="FunCoup" id="P03896">
    <property type="interactions" value="144"/>
</dbReference>
<dbReference type="STRING" id="7227.FBpp0100175"/>
<dbReference type="PaxDb" id="7227-FBpp0100175"/>
<dbReference type="EnsemblMetazoa" id="FBtr0100857">
    <property type="protein sequence ID" value="FBpp0100175"/>
    <property type="gene ID" value="FBgn0013680"/>
</dbReference>
<dbReference type="GeneID" id="19893529"/>
<dbReference type="KEGG" id="dme:Dmel_CG34063"/>
<dbReference type="AGR" id="FB:FBgn0013680"/>
<dbReference type="CTD" id="4536"/>
<dbReference type="FlyBase" id="FBgn0013680">
    <property type="gene designation" value="mt:ND2"/>
</dbReference>
<dbReference type="VEuPathDB" id="VectorBase:FBgn0013680"/>
<dbReference type="eggNOG" id="KOG4668">
    <property type="taxonomic scope" value="Eukaryota"/>
</dbReference>
<dbReference type="GeneTree" id="ENSGT00730000111348"/>
<dbReference type="HOGENOM" id="CLU_007100_1_3_1"/>
<dbReference type="InParanoid" id="P03896"/>
<dbReference type="OMA" id="HFWVPEV"/>
<dbReference type="OrthoDB" id="4092844at2759"/>
<dbReference type="PhylomeDB" id="P03896"/>
<dbReference type="Reactome" id="R-DME-611105">
    <property type="pathway name" value="Respiratory electron transport"/>
</dbReference>
<dbReference type="Reactome" id="R-DME-6799198">
    <property type="pathway name" value="Complex I biogenesis"/>
</dbReference>
<dbReference type="GenomeRNAi" id="19893529"/>
<dbReference type="PRO" id="PR:P03896"/>
<dbReference type="Proteomes" id="UP000000803">
    <property type="component" value="Mitochondrion"/>
</dbReference>
<dbReference type="Bgee" id="FBgn0013680">
    <property type="expression patterns" value="Expressed in adult class III enteroendocrine cell in adult midgut (Drosophila) and 191 other cell types or tissues"/>
</dbReference>
<dbReference type="ExpressionAtlas" id="P03896">
    <property type="expression patterns" value="baseline"/>
</dbReference>
<dbReference type="GO" id="GO:0005743">
    <property type="term" value="C:mitochondrial inner membrane"/>
    <property type="evidence" value="ECO:0000305"/>
    <property type="project" value="FlyBase"/>
</dbReference>
<dbReference type="GO" id="GO:0045271">
    <property type="term" value="C:respiratory chain complex I"/>
    <property type="evidence" value="ECO:0000314"/>
    <property type="project" value="FlyBase"/>
</dbReference>
<dbReference type="GO" id="GO:0008137">
    <property type="term" value="F:NADH dehydrogenase (ubiquinone) activity"/>
    <property type="evidence" value="ECO:0000318"/>
    <property type="project" value="GO_Central"/>
</dbReference>
<dbReference type="GO" id="GO:0006120">
    <property type="term" value="P:mitochondrial electron transport, NADH to ubiquinone"/>
    <property type="evidence" value="ECO:0000318"/>
    <property type="project" value="GO_Central"/>
</dbReference>
<dbReference type="InterPro" id="IPR050175">
    <property type="entry name" value="Complex_I_Subunit_2"/>
</dbReference>
<dbReference type="InterPro" id="IPR010933">
    <property type="entry name" value="NADH_DH_su2_C"/>
</dbReference>
<dbReference type="InterPro" id="IPR003917">
    <property type="entry name" value="NADH_UbQ_OxRdtase_chain2"/>
</dbReference>
<dbReference type="InterPro" id="IPR001750">
    <property type="entry name" value="ND/Mrp_TM"/>
</dbReference>
<dbReference type="PANTHER" id="PTHR46552">
    <property type="entry name" value="NADH-UBIQUINONE OXIDOREDUCTASE CHAIN 2"/>
    <property type="match status" value="1"/>
</dbReference>
<dbReference type="PANTHER" id="PTHR46552:SF1">
    <property type="entry name" value="NADH-UBIQUINONE OXIDOREDUCTASE CHAIN 2"/>
    <property type="match status" value="1"/>
</dbReference>
<dbReference type="Pfam" id="PF06444">
    <property type="entry name" value="NADH_dehy_S2_C"/>
    <property type="match status" value="1"/>
</dbReference>
<dbReference type="Pfam" id="PF00361">
    <property type="entry name" value="Proton_antipo_M"/>
    <property type="match status" value="1"/>
</dbReference>
<dbReference type="PRINTS" id="PR01436">
    <property type="entry name" value="NADHDHGNASE2"/>
</dbReference>
<proteinExistence type="evidence at protein level"/>
<accession>P03896</accession>
<accession>B6E0P2</accession>
<accession>B6E0Q5</accession>
<accession>B6E0U4</accession>
<accession>Q34347</accession>
<accession>Q34348</accession>
<accession>Q9MGN7</accession>
<accession>Q9MGP1</accession>
<accession>Q9MJC9</accession>
<name>NU2M_DROME</name>
<evidence type="ECO:0000250" key="1"/>
<evidence type="ECO:0000255" key="2"/>
<evidence type="ECO:0000269" key="3">
    <source>
    </source>
</evidence>
<evidence type="ECO:0000269" key="4">
    <source>
    </source>
</evidence>
<evidence type="ECO:0000269" key="5">
    <source>
    </source>
</evidence>
<evidence type="ECO:0000269" key="6">
    <source>
    </source>
</evidence>
<evidence type="ECO:0000269" key="7">
    <source>
    </source>
</evidence>
<evidence type="ECO:0000269" key="8">
    <source>
    </source>
</evidence>
<evidence type="ECO:0000305" key="9"/>
<evidence type="ECO:0007829" key="10">
    <source>
        <dbReference type="PDB" id="8B9Z"/>
    </source>
</evidence>
<feature type="chain" id="PRO_0000117581" description="NADH-ubiquinone oxidoreductase chain 2">
    <location>
        <begin position="1"/>
        <end position="341"/>
    </location>
</feature>
<feature type="transmembrane region" description="Helical" evidence="2">
    <location>
        <begin position="8"/>
        <end position="28"/>
    </location>
</feature>
<feature type="transmembrane region" description="Helical" evidence="2">
    <location>
        <begin position="60"/>
        <end position="80"/>
    </location>
</feature>
<feature type="transmembrane region" description="Helical" evidence="2">
    <location>
        <begin position="95"/>
        <end position="115"/>
    </location>
</feature>
<feature type="transmembrane region" description="Helical" evidence="2">
    <location>
        <begin position="121"/>
        <end position="141"/>
    </location>
</feature>
<feature type="transmembrane region" description="Helical" evidence="2">
    <location>
        <begin position="146"/>
        <end position="166"/>
    </location>
</feature>
<feature type="transmembrane region" description="Helical" evidence="2">
    <location>
        <begin position="195"/>
        <end position="215"/>
    </location>
</feature>
<feature type="transmembrane region" description="Helical" evidence="2">
    <location>
        <begin position="238"/>
        <end position="258"/>
    </location>
</feature>
<feature type="transmembrane region" description="Helical" evidence="2">
    <location>
        <begin position="273"/>
        <end position="293"/>
    </location>
</feature>
<feature type="transmembrane region" description="Helical" evidence="2">
    <location>
        <begin position="321"/>
        <end position="341"/>
    </location>
</feature>
<feature type="sequence variant" description="In strain: Zimbabwe 53." evidence="3">
    <original>Y</original>
    <variation>F</variation>
    <location>
        <position position="148"/>
    </location>
</feature>
<feature type="sequence variant" description="In strain: Japan." evidence="4">
    <original>H</original>
    <variation>Y</variation>
    <location>
        <position position="182"/>
    </location>
</feature>
<feature type="sequence variant" description="In strain: Oregon-R." evidence="7 8">
    <original>Y</original>
    <variation>L</variation>
    <location>
        <position position="200"/>
    </location>
</feature>
<feature type="sequence variant" description="In strain: Oregon-R, SP1 and w1118iso." evidence="3 4 5 6 7 8">
    <original>L</original>
    <variation>I</variation>
    <location>
        <position position="277"/>
    </location>
</feature>
<feature type="helix" evidence="10">
    <location>
        <begin position="5"/>
        <end position="22"/>
    </location>
</feature>
<feature type="helix" evidence="10">
    <location>
        <begin position="27"/>
        <end position="45"/>
    </location>
</feature>
<feature type="helix" evidence="10">
    <location>
        <begin position="51"/>
        <end position="81"/>
    </location>
</feature>
<feature type="strand" evidence="10">
    <location>
        <begin position="82"/>
        <end position="86"/>
    </location>
</feature>
<feature type="helix" evidence="10">
    <location>
        <begin position="92"/>
        <end position="105"/>
    </location>
</feature>
<feature type="helix" evidence="10">
    <location>
        <begin position="108"/>
        <end position="110"/>
    </location>
</feature>
<feature type="helix" evidence="10">
    <location>
        <begin position="113"/>
        <end position="116"/>
    </location>
</feature>
<feature type="helix" evidence="10">
    <location>
        <begin position="123"/>
        <end position="130"/>
    </location>
</feature>
<feature type="helix" evidence="10">
    <location>
        <begin position="132"/>
        <end position="134"/>
    </location>
</feature>
<feature type="helix" evidence="10">
    <location>
        <begin position="135"/>
        <end position="141"/>
    </location>
</feature>
<feature type="helix" evidence="10">
    <location>
        <begin position="148"/>
        <end position="166"/>
    </location>
</feature>
<feature type="helix" evidence="10">
    <location>
        <begin position="171"/>
        <end position="190"/>
    </location>
</feature>
<feature type="helix" evidence="10">
    <location>
        <begin position="195"/>
        <end position="218"/>
    </location>
</feature>
<feature type="helix" evidence="10">
    <location>
        <begin position="223"/>
        <end position="228"/>
    </location>
</feature>
<feature type="helix" evidence="10">
    <location>
        <begin position="234"/>
        <end position="240"/>
    </location>
</feature>
<feature type="helix" evidence="10">
    <location>
        <begin position="242"/>
        <end position="247"/>
    </location>
</feature>
<feature type="helix" evidence="10">
    <location>
        <begin position="256"/>
        <end position="266"/>
    </location>
</feature>
<feature type="turn" evidence="10">
    <location>
        <begin position="267"/>
        <end position="270"/>
    </location>
</feature>
<feature type="helix" evidence="10">
    <location>
        <begin position="272"/>
        <end position="293"/>
    </location>
</feature>
<feature type="turn" evidence="10">
    <location>
        <begin position="294"/>
        <end position="296"/>
    </location>
</feature>
<feature type="strand" evidence="10">
    <location>
        <begin position="303"/>
        <end position="306"/>
    </location>
</feature>
<feature type="helix" evidence="10">
    <location>
        <begin position="314"/>
        <end position="329"/>
    </location>
</feature>
<feature type="helix" evidence="10">
    <location>
        <begin position="330"/>
        <end position="335"/>
    </location>
</feature>
<organism>
    <name type="scientific">Drosophila melanogaster</name>
    <name type="common">Fruit fly</name>
    <dbReference type="NCBI Taxonomy" id="7227"/>
    <lineage>
        <taxon>Eukaryota</taxon>
        <taxon>Metazoa</taxon>
        <taxon>Ecdysozoa</taxon>
        <taxon>Arthropoda</taxon>
        <taxon>Hexapoda</taxon>
        <taxon>Insecta</taxon>
        <taxon>Pterygota</taxon>
        <taxon>Neoptera</taxon>
        <taxon>Endopterygota</taxon>
        <taxon>Diptera</taxon>
        <taxon>Brachycera</taxon>
        <taxon>Muscomorpha</taxon>
        <taxon>Ephydroidea</taxon>
        <taxon>Drosophilidae</taxon>
        <taxon>Drosophila</taxon>
        <taxon>Sophophora</taxon>
    </lineage>
</organism>
<gene>
    <name type="primary">mt:ND2</name>
    <name type="synonym">NADH2</name>
    <name type="synonym">ND2</name>
</gene>
<reference key="1">
    <citation type="journal article" date="2000" name="J. Mol. Evol.">
        <title>Comparative genomics of mitochondrial DNA in members of the Drosophila melanogaster subgroup.</title>
        <authorList>
            <person name="Ballard J.W.O."/>
        </authorList>
    </citation>
    <scope>NUCLEOTIDE SEQUENCE [GENOMIC DNA]</scope>
    <scope>VARIANTS PHE-148 AND ILE-277</scope>
    <source>
        <strain>Oregon-R</strain>
        <strain>Zimbabwe 53</strain>
    </source>
</reference>
<reference key="2">
    <citation type="journal article" date="2001" name="Heredity">
        <title>I-R system of hybrid dysgenesis in Drosophila melanogaster: analysis of the mitochondrial DNA in reactive strains exhibiting different potentials for I factor transposition.</title>
        <authorList>
            <person name="Azou Y."/>
            <person name="Bregliano J.C."/>
        </authorList>
    </citation>
    <scope>NUCLEOTIDE SEQUENCE [GENOMIC DNA]</scope>
    <source>
        <strain>Paris</strain>
    </source>
</reference>
<reference key="3">
    <citation type="journal article" date="2008" name="Aging Cell">
        <title>Variation in mitochondrial genotype has substantial lifespan effects which may be modulated by nuclear background.</title>
        <authorList>
            <person name="Clancy D.J."/>
        </authorList>
    </citation>
    <scope>NUCLEOTIDE SEQUENCE [GENOMIC DNA]</scope>
    <scope>VARIANTS TYR-182 AND ILE-277</scope>
    <source>
        <strain>Alstonvl</strain>
        <strain>Brownsvl</strain>
        <strain>Dahomey</strain>
        <strain>Japan</strain>
        <strain>Mysore</strain>
        <strain>W1118iso</strain>
    </source>
</reference>
<reference key="4">
    <citation type="journal article" date="2009" name="Gene">
        <title>Characterization of mature mitochondrial transcripts in Drosophila, and the implications for the tRNA punctuation model in arthropods.</title>
        <authorList>
            <person name="Stewart J.B."/>
            <person name="Beckenbach A.T."/>
        </authorList>
    </citation>
    <scope>NUCLEOTIDE SEQUENCE [MRNA]</scope>
    <scope>VARIANT ILE-277</scope>
    <source>
        <strain>Oregon-R</strain>
    </source>
</reference>
<reference key="5">
    <citation type="journal article" date="1995" name="Insect Mol. Biol.">
        <title>Drosophila melanogaster mitochondrial DNA: completion of the nucleotide sequence and evolutionary comparisons.</title>
        <authorList>
            <person name="Lewis D.L."/>
            <person name="Farr C.L."/>
            <person name="Kaguni L.S."/>
        </authorList>
    </citation>
    <scope>NUCLEOTIDE SEQUENCE [LARGE SCALE GENOMIC DNA]</scope>
    <scope>VARIANTS LEU-200 AND ILE-277</scope>
</reference>
<reference key="6">
    <citation type="submission" date="2014-08" db="EMBL/GenBank/DDBJ databases">
        <authorList>
            <person name="Wan K."/>
            <person name="Celniker S."/>
        </authorList>
    </citation>
    <scope>NUCLEOTIDE SEQUENCE [LARGE SCALE GENOMIC DNA]</scope>
    <source>
        <strain>Berkeley</strain>
    </source>
</reference>
<reference key="7">
    <citation type="journal article" date="1983" name="Nature">
        <title>Drosophila melanogaster mitochondrial DNA, a novel organization and genetic code.</title>
        <authorList>
            <person name="de Bruijn M.H.L."/>
        </authorList>
    </citation>
    <scope>NUCLEOTIDE SEQUENCE [GENOMIC DNA] OF 56-341</scope>
    <scope>VARIANTS LEU-200 AND ILE-277</scope>
    <source>
        <strain>Oregon-R</strain>
        <tissue>Embryo</tissue>
    </source>
</reference>
<reference key="8">
    <citation type="journal article" date="1990" name="Proc. Natl. Acad. Sci. U.S.A.">
        <title>Evolution of Drosophila mitochondrial DNA and the history of the melanogaster subgroup.</title>
        <authorList>
            <person name="Satta Y."/>
            <person name="Takahata N."/>
        </authorList>
    </citation>
    <scope>NUCLEOTIDE SEQUENCE [GENOMIC DNA] OF 68-341</scope>
    <scope>VARIANT ILE-277</scope>
    <source>
        <strain>SP1</strain>
    </source>
</reference>
<comment type="function">
    <text evidence="1">Core subunit of the mitochondrial membrane respiratory chain NADH dehydrogenase (Complex I) that is believed to belong to the minimal assembly required for catalysis. Complex I functions in the transfer of electrons from NADH to the respiratory chain. The immediate electron acceptor for the enzyme is believed to be ubiquinone (By similarity).</text>
</comment>
<comment type="catalytic activity">
    <reaction>
        <text>a ubiquinone + NADH + 5 H(+)(in) = a ubiquinol + NAD(+) + 4 H(+)(out)</text>
        <dbReference type="Rhea" id="RHEA:29091"/>
        <dbReference type="Rhea" id="RHEA-COMP:9565"/>
        <dbReference type="Rhea" id="RHEA-COMP:9566"/>
        <dbReference type="ChEBI" id="CHEBI:15378"/>
        <dbReference type="ChEBI" id="CHEBI:16389"/>
        <dbReference type="ChEBI" id="CHEBI:17976"/>
        <dbReference type="ChEBI" id="CHEBI:57540"/>
        <dbReference type="ChEBI" id="CHEBI:57945"/>
        <dbReference type="EC" id="7.1.1.2"/>
    </reaction>
</comment>
<comment type="subcellular location">
    <subcellularLocation>
        <location>Mitochondrion inner membrane</location>
        <topology>Multi-pass membrane protein</topology>
    </subcellularLocation>
</comment>
<comment type="similarity">
    <text evidence="9">Belongs to the complex I subunit 2 family.</text>
</comment>